<name>FIS_SALPB</name>
<gene>
    <name evidence="1" type="primary">fis</name>
    <name type="ordered locus">SPAB_04219</name>
</gene>
<feature type="chain" id="PRO_1000076983" description="DNA-binding protein Fis">
    <location>
        <begin position="1"/>
        <end position="98"/>
    </location>
</feature>
<feature type="DNA-binding region" description="H-T-H motif" evidence="1">
    <location>
        <begin position="74"/>
        <end position="93"/>
    </location>
</feature>
<proteinExistence type="inferred from homology"/>
<accession>A9N889</accession>
<comment type="function">
    <text evidence="1">Activates ribosomal RNA transcription. Plays a direct role in upstream activation of rRNA promoters.</text>
</comment>
<comment type="subunit">
    <text evidence="1">Homodimer.</text>
</comment>
<comment type="similarity">
    <text evidence="1">Belongs to the transcriptional regulatory Fis family.</text>
</comment>
<sequence length="98" mass="11240">MFEQRVNSDVLTVSTVNSQDQVTQKPLRDSVKQALKNYFAQLNGQDVNDLYELVLAEVEQPLLDMVMQYTRGNQTRAALMMGINRGTLRKKLKKYGMN</sequence>
<organism>
    <name type="scientific">Salmonella paratyphi B (strain ATCC BAA-1250 / SPB7)</name>
    <dbReference type="NCBI Taxonomy" id="1016998"/>
    <lineage>
        <taxon>Bacteria</taxon>
        <taxon>Pseudomonadati</taxon>
        <taxon>Pseudomonadota</taxon>
        <taxon>Gammaproteobacteria</taxon>
        <taxon>Enterobacterales</taxon>
        <taxon>Enterobacteriaceae</taxon>
        <taxon>Salmonella</taxon>
    </lineage>
</organism>
<reference key="1">
    <citation type="submission" date="2007-11" db="EMBL/GenBank/DDBJ databases">
        <authorList>
            <consortium name="The Salmonella enterica serovar Paratyphi B Genome Sequencing Project"/>
            <person name="McClelland M."/>
            <person name="Sanderson E.K."/>
            <person name="Porwollik S."/>
            <person name="Spieth J."/>
            <person name="Clifton W.S."/>
            <person name="Fulton R."/>
            <person name="Cordes M."/>
            <person name="Wollam A."/>
            <person name="Shah N."/>
            <person name="Pepin K."/>
            <person name="Bhonagiri V."/>
            <person name="Nash W."/>
            <person name="Johnson M."/>
            <person name="Thiruvilangam P."/>
            <person name="Wilson R."/>
        </authorList>
    </citation>
    <scope>NUCLEOTIDE SEQUENCE [LARGE SCALE GENOMIC DNA]</scope>
    <source>
        <strain>ATCC BAA-1250 / SPB7</strain>
    </source>
</reference>
<evidence type="ECO:0000255" key="1">
    <source>
        <dbReference type="HAMAP-Rule" id="MF_00166"/>
    </source>
</evidence>
<protein>
    <recommendedName>
        <fullName evidence="1">DNA-binding protein Fis</fullName>
    </recommendedName>
</protein>
<keyword id="KW-0010">Activator</keyword>
<keyword id="KW-0238">DNA-binding</keyword>
<keyword id="KW-0804">Transcription</keyword>
<keyword id="KW-0805">Transcription regulation</keyword>
<dbReference type="EMBL" id="CP000886">
    <property type="protein sequence ID" value="ABX69542.1"/>
    <property type="molecule type" value="Genomic_DNA"/>
</dbReference>
<dbReference type="RefSeq" id="WP_000462905.1">
    <property type="nucleotide sequence ID" value="NC_010102.1"/>
</dbReference>
<dbReference type="SMR" id="A9N889"/>
<dbReference type="GeneID" id="98390389"/>
<dbReference type="KEGG" id="spq:SPAB_04219"/>
<dbReference type="PATRIC" id="fig|1016998.12.peg.3973"/>
<dbReference type="HOGENOM" id="CLU_158040_3_0_6"/>
<dbReference type="BioCyc" id="SENT1016998:SPAB_RS17155-MONOMER"/>
<dbReference type="Proteomes" id="UP000008556">
    <property type="component" value="Chromosome"/>
</dbReference>
<dbReference type="GO" id="GO:0003700">
    <property type="term" value="F:DNA-binding transcription factor activity"/>
    <property type="evidence" value="ECO:0007669"/>
    <property type="project" value="UniProtKB-UniRule"/>
</dbReference>
<dbReference type="GO" id="GO:0043565">
    <property type="term" value="F:sequence-specific DNA binding"/>
    <property type="evidence" value="ECO:0007669"/>
    <property type="project" value="InterPro"/>
</dbReference>
<dbReference type="FunFam" id="1.10.10.60:FF:000006">
    <property type="entry name" value="DNA-binding protein Fis"/>
    <property type="match status" value="1"/>
</dbReference>
<dbReference type="Gene3D" id="1.10.10.60">
    <property type="entry name" value="Homeodomain-like"/>
    <property type="match status" value="1"/>
</dbReference>
<dbReference type="HAMAP" id="MF_00166">
    <property type="entry name" value="DNA_binding_Fis"/>
    <property type="match status" value="1"/>
</dbReference>
<dbReference type="InterPro" id="IPR005412">
    <property type="entry name" value="Fis_DNA-bd"/>
</dbReference>
<dbReference type="InterPro" id="IPR009057">
    <property type="entry name" value="Homeodomain-like_sf"/>
</dbReference>
<dbReference type="InterPro" id="IPR002197">
    <property type="entry name" value="HTH_Fis"/>
</dbReference>
<dbReference type="InterPro" id="IPR050207">
    <property type="entry name" value="Trans_regulatory_Fis"/>
</dbReference>
<dbReference type="NCBIfam" id="NF001659">
    <property type="entry name" value="PRK00430.1"/>
    <property type="match status" value="1"/>
</dbReference>
<dbReference type="PANTHER" id="PTHR47918">
    <property type="entry name" value="DNA-BINDING PROTEIN FIS"/>
    <property type="match status" value="1"/>
</dbReference>
<dbReference type="PANTHER" id="PTHR47918:SF1">
    <property type="entry name" value="DNA-BINDING PROTEIN FIS"/>
    <property type="match status" value="1"/>
</dbReference>
<dbReference type="Pfam" id="PF02954">
    <property type="entry name" value="HTH_8"/>
    <property type="match status" value="1"/>
</dbReference>
<dbReference type="PIRSF" id="PIRSF002097">
    <property type="entry name" value="DNA-binding_Fis"/>
    <property type="match status" value="1"/>
</dbReference>
<dbReference type="PRINTS" id="PR01591">
    <property type="entry name" value="DNABINDNGFIS"/>
</dbReference>
<dbReference type="PRINTS" id="PR01590">
    <property type="entry name" value="HTHFIS"/>
</dbReference>
<dbReference type="SUPFAM" id="SSF46689">
    <property type="entry name" value="Homeodomain-like"/>
    <property type="match status" value="1"/>
</dbReference>